<accession>O16444</accession>
<organism>
    <name type="scientific">Caenorhabditis elegans</name>
    <dbReference type="NCBI Taxonomy" id="6239"/>
    <lineage>
        <taxon>Eukaryota</taxon>
        <taxon>Metazoa</taxon>
        <taxon>Ecdysozoa</taxon>
        <taxon>Nematoda</taxon>
        <taxon>Chromadorea</taxon>
        <taxon>Rhabditida</taxon>
        <taxon>Rhabditina</taxon>
        <taxon>Rhabditomorpha</taxon>
        <taxon>Rhabditoidea</taxon>
        <taxon>Rhabditidae</taxon>
        <taxon>Peloderinae</taxon>
        <taxon>Caenorhabditis</taxon>
    </lineage>
</organism>
<dbReference type="EMBL" id="FO080340">
    <property type="protein sequence ID" value="CCD62998.1"/>
    <property type="molecule type" value="Genomic_DNA"/>
</dbReference>
<dbReference type="PIR" id="T31861">
    <property type="entry name" value="T31861"/>
</dbReference>
<dbReference type="RefSeq" id="NP_504935.3">
    <property type="nucleotide sequence ID" value="NM_072534.4"/>
</dbReference>
<dbReference type="FunCoup" id="O16444">
    <property type="interactions" value="1522"/>
</dbReference>
<dbReference type="PaxDb" id="6239-C54F6.7"/>
<dbReference type="EnsemblMetazoa" id="C54F6.7.1">
    <property type="protein sequence ID" value="C54F6.7.1"/>
    <property type="gene ID" value="WBGene00016925"/>
</dbReference>
<dbReference type="GeneID" id="183806"/>
<dbReference type="KEGG" id="cel:CELE_C54F6.7"/>
<dbReference type="UCSC" id="C54F6.7">
    <property type="organism name" value="c. elegans"/>
</dbReference>
<dbReference type="AGR" id="WB:WBGene00016925"/>
<dbReference type="CTD" id="183806"/>
<dbReference type="WormBase" id="C54F6.7">
    <property type="protein sequence ID" value="CE45277"/>
    <property type="gene ID" value="WBGene00016925"/>
    <property type="gene designation" value="srb-18"/>
</dbReference>
<dbReference type="eggNOG" id="ENOG502TH8Q">
    <property type="taxonomic scope" value="Eukaryota"/>
</dbReference>
<dbReference type="GeneTree" id="ENSGT00970000195848"/>
<dbReference type="HOGENOM" id="CLU_065027_0_0_1"/>
<dbReference type="InParanoid" id="O16444"/>
<dbReference type="OMA" id="CAPFRYT"/>
<dbReference type="OrthoDB" id="5813133at2759"/>
<dbReference type="PhylomeDB" id="O16444"/>
<dbReference type="PRO" id="PR:O16444"/>
<dbReference type="Proteomes" id="UP000001940">
    <property type="component" value="Chromosome V"/>
</dbReference>
<dbReference type="GO" id="GO:0016020">
    <property type="term" value="C:membrane"/>
    <property type="evidence" value="ECO:0007669"/>
    <property type="project" value="UniProtKB-SubCell"/>
</dbReference>
<dbReference type="GO" id="GO:0004930">
    <property type="term" value="F:G protein-coupled receptor activity"/>
    <property type="evidence" value="ECO:0007669"/>
    <property type="project" value="InterPro"/>
</dbReference>
<dbReference type="GO" id="GO:0004984">
    <property type="term" value="F:olfactory receptor activity"/>
    <property type="evidence" value="ECO:0000318"/>
    <property type="project" value="GO_Central"/>
</dbReference>
<dbReference type="GO" id="GO:0050907">
    <property type="term" value="P:detection of chemical stimulus involved in sensory perception"/>
    <property type="evidence" value="ECO:0000318"/>
    <property type="project" value="GO_Central"/>
</dbReference>
<dbReference type="InterPro" id="IPR000344">
    <property type="entry name" value="7TM_GPCR_serpentine_rcpt_Sra"/>
</dbReference>
<dbReference type="InterPro" id="IPR051080">
    <property type="entry name" value="Nematode_rcpt-like_serp_alpha"/>
</dbReference>
<dbReference type="PANTHER" id="PTHR31357">
    <property type="entry name" value="SERPENTINE RECEPTOR CLASS ALPHA-10"/>
    <property type="match status" value="1"/>
</dbReference>
<dbReference type="PANTHER" id="PTHR31357:SF20">
    <property type="entry name" value="SERPENTINE RECEPTOR CLASS BETA-18"/>
    <property type="match status" value="1"/>
</dbReference>
<dbReference type="Pfam" id="PF02117">
    <property type="entry name" value="7TM_GPCR_Sra"/>
    <property type="match status" value="1"/>
</dbReference>
<evidence type="ECO:0000255" key="1"/>
<evidence type="ECO:0000305" key="2"/>
<sequence>MTSEEIHAAGLCSVVPTIFQNCDNDWISKNGTCYQDSCCMSLETATSWYYRLAQFSHVVFSFMGLIIVVVYILRYRSRHILPENVRVLVDFMLLFIVAHSIDMIVLHIYHIIQSFQANISDPCFVREKVSFCAPFRYTFSFCSMGLAICTYCIYIDRLACAYYKNYTKHQRLILAAQICQLIVISSLIIIWVYRNEEPNTYLLSCLNVPVASVEDMAKATIAVFPINFICFFLSIGLFRHFKKKEEGSRFDIVRHFTASVDVESSEFLFRTTGTQAALMALFSVASLLMRLVYNFLPRQVGLTIATLSYIMSIYCFTVPLVIVKCVQKTSALRKSRISSHVGLKAMGVEGASNYFEMMKSQWE</sequence>
<comment type="subcellular location">
    <subcellularLocation>
        <location evidence="2">Membrane</location>
        <topology evidence="2">Multi-pass membrane protein</topology>
    </subcellularLocation>
</comment>
<comment type="similarity">
    <text evidence="2">Belongs to the nematode receptor-like protein srb family.</text>
</comment>
<keyword id="KW-0472">Membrane</keyword>
<keyword id="KW-1185">Reference proteome</keyword>
<keyword id="KW-0812">Transmembrane</keyword>
<keyword id="KW-1133">Transmembrane helix</keyword>
<feature type="chain" id="PRO_0000104507" description="Serpentine receptor class beta-18">
    <location>
        <begin position="1"/>
        <end position="363"/>
    </location>
</feature>
<feature type="transmembrane region" description="Helical" evidence="1">
    <location>
        <begin position="52"/>
        <end position="72"/>
    </location>
</feature>
<feature type="transmembrane region" description="Helical" evidence="1">
    <location>
        <begin position="92"/>
        <end position="112"/>
    </location>
</feature>
<feature type="transmembrane region" description="Helical" evidence="1">
    <location>
        <begin position="135"/>
        <end position="155"/>
    </location>
</feature>
<feature type="transmembrane region" description="Helical" evidence="1">
    <location>
        <begin position="172"/>
        <end position="192"/>
    </location>
</feature>
<feature type="transmembrane region" description="Helical" evidence="1">
    <location>
        <begin position="218"/>
        <end position="238"/>
    </location>
</feature>
<feature type="transmembrane region" description="Helical" evidence="1">
    <location>
        <begin position="276"/>
        <end position="296"/>
    </location>
</feature>
<feature type="transmembrane region" description="Helical" evidence="1">
    <location>
        <begin position="303"/>
        <end position="323"/>
    </location>
</feature>
<protein>
    <recommendedName>
        <fullName>Serpentine receptor class beta-18</fullName>
        <shortName>Protein srb-18</shortName>
    </recommendedName>
</protein>
<gene>
    <name type="primary">srb-18</name>
    <name type="ORF">C54F6.7</name>
</gene>
<name>SRB18_CAEEL</name>
<proteinExistence type="inferred from homology"/>
<reference key="1">
    <citation type="journal article" date="1998" name="Science">
        <title>Genome sequence of the nematode C. elegans: a platform for investigating biology.</title>
        <authorList>
            <consortium name="The C. elegans sequencing consortium"/>
        </authorList>
    </citation>
    <scope>NUCLEOTIDE SEQUENCE [LARGE SCALE GENOMIC DNA]</scope>
    <source>
        <strain>Bristol N2</strain>
    </source>
</reference>